<feature type="chain" id="PRO_1000128196" description="Small ribosomal subunit protein uS9">
    <location>
        <begin position="1"/>
        <end position="130"/>
    </location>
</feature>
<comment type="similarity">
    <text evidence="1">Belongs to the universal ribosomal protein uS9 family.</text>
</comment>
<proteinExistence type="inferred from homology"/>
<keyword id="KW-0687">Ribonucleoprotein</keyword>
<keyword id="KW-0689">Ribosomal protein</keyword>
<protein>
    <recommendedName>
        <fullName evidence="1">Small ribosomal subunit protein uS9</fullName>
    </recommendedName>
    <alternativeName>
        <fullName evidence="2">30S ribosomal protein S9</fullName>
    </alternativeName>
</protein>
<organism>
    <name type="scientific">Xanthomonas oryzae pv. oryzae (strain PXO99A)</name>
    <dbReference type="NCBI Taxonomy" id="360094"/>
    <lineage>
        <taxon>Bacteria</taxon>
        <taxon>Pseudomonadati</taxon>
        <taxon>Pseudomonadota</taxon>
        <taxon>Gammaproteobacteria</taxon>
        <taxon>Lysobacterales</taxon>
        <taxon>Lysobacteraceae</taxon>
        <taxon>Xanthomonas</taxon>
    </lineage>
</organism>
<gene>
    <name evidence="1" type="primary">rpsI</name>
    <name type="ordered locus">PXO_04011</name>
</gene>
<name>RS9_XANOP</name>
<sequence>MAITQNYGTGRRKSSTARVFLRKGTGKITVNDRPLDEFFGRETARMIVRQPLELTKNTESFDILVTASGGGTTGQAGAIRLGIARALVEYDETLKSELRKAGFMTRDAREVERKKVGLHKARRATQFSKR</sequence>
<accession>B2SL10</accession>
<evidence type="ECO:0000255" key="1">
    <source>
        <dbReference type="HAMAP-Rule" id="MF_00532"/>
    </source>
</evidence>
<evidence type="ECO:0000305" key="2"/>
<dbReference type="EMBL" id="CP000967">
    <property type="protein sequence ID" value="ACD57287.1"/>
    <property type="molecule type" value="Genomic_DNA"/>
</dbReference>
<dbReference type="RefSeq" id="WP_005990700.1">
    <property type="nucleotide sequence ID" value="NC_010717.2"/>
</dbReference>
<dbReference type="SMR" id="B2SL10"/>
<dbReference type="GeneID" id="93985751"/>
<dbReference type="KEGG" id="xop:PXO_04011"/>
<dbReference type="eggNOG" id="COG0103">
    <property type="taxonomic scope" value="Bacteria"/>
</dbReference>
<dbReference type="HOGENOM" id="CLU_046483_2_1_6"/>
<dbReference type="Proteomes" id="UP000001740">
    <property type="component" value="Chromosome"/>
</dbReference>
<dbReference type="GO" id="GO:0022627">
    <property type="term" value="C:cytosolic small ribosomal subunit"/>
    <property type="evidence" value="ECO:0007669"/>
    <property type="project" value="TreeGrafter"/>
</dbReference>
<dbReference type="GO" id="GO:0003723">
    <property type="term" value="F:RNA binding"/>
    <property type="evidence" value="ECO:0007669"/>
    <property type="project" value="TreeGrafter"/>
</dbReference>
<dbReference type="GO" id="GO:0003735">
    <property type="term" value="F:structural constituent of ribosome"/>
    <property type="evidence" value="ECO:0007669"/>
    <property type="project" value="InterPro"/>
</dbReference>
<dbReference type="GO" id="GO:0006412">
    <property type="term" value="P:translation"/>
    <property type="evidence" value="ECO:0007669"/>
    <property type="project" value="UniProtKB-UniRule"/>
</dbReference>
<dbReference type="FunFam" id="3.30.230.10:FF:000001">
    <property type="entry name" value="30S ribosomal protein S9"/>
    <property type="match status" value="1"/>
</dbReference>
<dbReference type="Gene3D" id="3.30.230.10">
    <property type="match status" value="1"/>
</dbReference>
<dbReference type="HAMAP" id="MF_00532_B">
    <property type="entry name" value="Ribosomal_uS9_B"/>
    <property type="match status" value="1"/>
</dbReference>
<dbReference type="InterPro" id="IPR020568">
    <property type="entry name" value="Ribosomal_Su5_D2-typ_SF"/>
</dbReference>
<dbReference type="InterPro" id="IPR000754">
    <property type="entry name" value="Ribosomal_uS9"/>
</dbReference>
<dbReference type="InterPro" id="IPR023035">
    <property type="entry name" value="Ribosomal_uS9_bac/plastid"/>
</dbReference>
<dbReference type="InterPro" id="IPR020574">
    <property type="entry name" value="Ribosomal_uS9_CS"/>
</dbReference>
<dbReference type="InterPro" id="IPR014721">
    <property type="entry name" value="Ribsml_uS5_D2-typ_fold_subgr"/>
</dbReference>
<dbReference type="NCBIfam" id="NF001099">
    <property type="entry name" value="PRK00132.1"/>
    <property type="match status" value="1"/>
</dbReference>
<dbReference type="PANTHER" id="PTHR21569">
    <property type="entry name" value="RIBOSOMAL PROTEIN S9"/>
    <property type="match status" value="1"/>
</dbReference>
<dbReference type="PANTHER" id="PTHR21569:SF1">
    <property type="entry name" value="SMALL RIBOSOMAL SUBUNIT PROTEIN US9M"/>
    <property type="match status" value="1"/>
</dbReference>
<dbReference type="Pfam" id="PF00380">
    <property type="entry name" value="Ribosomal_S9"/>
    <property type="match status" value="1"/>
</dbReference>
<dbReference type="SUPFAM" id="SSF54211">
    <property type="entry name" value="Ribosomal protein S5 domain 2-like"/>
    <property type="match status" value="1"/>
</dbReference>
<dbReference type="PROSITE" id="PS00360">
    <property type="entry name" value="RIBOSOMAL_S9"/>
    <property type="match status" value="1"/>
</dbReference>
<reference key="1">
    <citation type="journal article" date="2008" name="BMC Genomics">
        <title>Genome sequence and rapid evolution of the rice pathogen Xanthomonas oryzae pv. oryzae PXO99A.</title>
        <authorList>
            <person name="Salzberg S.L."/>
            <person name="Sommer D.D."/>
            <person name="Schatz M.C."/>
            <person name="Phillippy A.M."/>
            <person name="Rabinowicz P.D."/>
            <person name="Tsuge S."/>
            <person name="Furutani A."/>
            <person name="Ochiai H."/>
            <person name="Delcher A.L."/>
            <person name="Kelley D."/>
            <person name="Madupu R."/>
            <person name="Puiu D."/>
            <person name="Radune D."/>
            <person name="Shumway M."/>
            <person name="Trapnell C."/>
            <person name="Aparna G."/>
            <person name="Jha G."/>
            <person name="Pandey A."/>
            <person name="Patil P.B."/>
            <person name="Ishihara H."/>
            <person name="Meyer D.F."/>
            <person name="Szurek B."/>
            <person name="Verdier V."/>
            <person name="Koebnik R."/>
            <person name="Dow J.M."/>
            <person name="Ryan R.P."/>
            <person name="Hirata H."/>
            <person name="Tsuyumu S."/>
            <person name="Won Lee S."/>
            <person name="Seo Y.-S."/>
            <person name="Sriariyanum M."/>
            <person name="Ronald P.C."/>
            <person name="Sonti R.V."/>
            <person name="Van Sluys M.-A."/>
            <person name="Leach J.E."/>
            <person name="White F.F."/>
            <person name="Bogdanove A.J."/>
        </authorList>
    </citation>
    <scope>NUCLEOTIDE SEQUENCE [LARGE SCALE GENOMIC DNA]</scope>
    <source>
        <strain>PXO99A</strain>
    </source>
</reference>